<sequence length="201" mass="22087">MELVLKDAQSALTVSETTFGRDFNEALVHQVVVAYAAGARQGTRAQKTRAEVTGSGKKPWRQKGTGRARSGSIKSPIWRSGGVTFAARPQDHSQKVNKKMYRGALKSILSELVRQDRLIVVEKFSVEAPKTKLLAQKLKDMALEDVLIITGELDENLFLAARNLHKVDVRDATGIDPVSLIAFDKVVMTADAVKQVEEMLA</sequence>
<feature type="chain" id="PRO_0000129216" description="Large ribosomal subunit protein uL4">
    <location>
        <begin position="1"/>
        <end position="201"/>
    </location>
</feature>
<feature type="region of interest" description="Disordered" evidence="3">
    <location>
        <begin position="44"/>
        <end position="71"/>
    </location>
</feature>
<protein>
    <recommendedName>
        <fullName evidence="2">Large ribosomal subunit protein uL4</fullName>
    </recommendedName>
    <alternativeName>
        <fullName evidence="4">50S ribosomal protein L4</fullName>
    </alternativeName>
</protein>
<comment type="function">
    <text evidence="2">One of the primary rRNA binding proteins, this protein initially binds near the 5'-end of the 23S rRNA. It is important during the early stages of 50S assembly. It makes multiple contacts with different domains of the 23S rRNA in the assembled 50S subunit and ribosome.</text>
</comment>
<comment type="function">
    <text evidence="1">Protein L4 is a both a transcriptional repressor and a translational repressor protein. It regulates transcription of the S10 operon (to which L4 belongs) by causing premature termination of transcription within the S10 leader. L4 controls the translation of the S10 operon by binding to its mRNA (By similarity).</text>
</comment>
<comment type="function">
    <text evidence="2">Forms part of the polypeptide exit tunnel.</text>
</comment>
<comment type="subunit">
    <text evidence="2">Part of the 50S ribosomal subunit.</text>
</comment>
<comment type="similarity">
    <text evidence="2">Belongs to the universal ribosomal protein uL4 family.</text>
</comment>
<evidence type="ECO:0000250" key="1"/>
<evidence type="ECO:0000255" key="2">
    <source>
        <dbReference type="HAMAP-Rule" id="MF_01328"/>
    </source>
</evidence>
<evidence type="ECO:0000256" key="3">
    <source>
        <dbReference type="SAM" id="MobiDB-lite"/>
    </source>
</evidence>
<evidence type="ECO:0000305" key="4"/>
<organism>
    <name type="scientific">Escherichia coli O6:H1 (strain CFT073 / ATCC 700928 / UPEC)</name>
    <dbReference type="NCBI Taxonomy" id="199310"/>
    <lineage>
        <taxon>Bacteria</taxon>
        <taxon>Pseudomonadati</taxon>
        <taxon>Pseudomonadota</taxon>
        <taxon>Gammaproteobacteria</taxon>
        <taxon>Enterobacterales</taxon>
        <taxon>Enterobacteriaceae</taxon>
        <taxon>Escherichia</taxon>
    </lineage>
</organism>
<dbReference type="EMBL" id="AE014075">
    <property type="protein sequence ID" value="AAN82527.1"/>
    <property type="molecule type" value="Genomic_DNA"/>
</dbReference>
<dbReference type="RefSeq" id="WP_000424395.1">
    <property type="nucleotide sequence ID" value="NZ_CP051263.1"/>
</dbReference>
<dbReference type="SMR" id="P60724"/>
<dbReference type="STRING" id="199310.c4089"/>
<dbReference type="GeneID" id="97442859"/>
<dbReference type="KEGG" id="ecc:c4089"/>
<dbReference type="eggNOG" id="COG0088">
    <property type="taxonomic scope" value="Bacteria"/>
</dbReference>
<dbReference type="HOGENOM" id="CLU_041575_5_2_6"/>
<dbReference type="BioCyc" id="ECOL199310:C4089-MONOMER"/>
<dbReference type="Proteomes" id="UP000001410">
    <property type="component" value="Chromosome"/>
</dbReference>
<dbReference type="GO" id="GO:1990904">
    <property type="term" value="C:ribonucleoprotein complex"/>
    <property type="evidence" value="ECO:0007669"/>
    <property type="project" value="UniProtKB-KW"/>
</dbReference>
<dbReference type="GO" id="GO:0005840">
    <property type="term" value="C:ribosome"/>
    <property type="evidence" value="ECO:0007669"/>
    <property type="project" value="UniProtKB-KW"/>
</dbReference>
<dbReference type="GO" id="GO:0019843">
    <property type="term" value="F:rRNA binding"/>
    <property type="evidence" value="ECO:0007669"/>
    <property type="project" value="UniProtKB-UniRule"/>
</dbReference>
<dbReference type="GO" id="GO:0003735">
    <property type="term" value="F:structural constituent of ribosome"/>
    <property type="evidence" value="ECO:0007669"/>
    <property type="project" value="InterPro"/>
</dbReference>
<dbReference type="GO" id="GO:0006353">
    <property type="term" value="P:DNA-templated transcription termination"/>
    <property type="evidence" value="ECO:0007669"/>
    <property type="project" value="UniProtKB-KW"/>
</dbReference>
<dbReference type="GO" id="GO:0006417">
    <property type="term" value="P:regulation of translation"/>
    <property type="evidence" value="ECO:0007669"/>
    <property type="project" value="UniProtKB-KW"/>
</dbReference>
<dbReference type="GO" id="GO:0006412">
    <property type="term" value="P:translation"/>
    <property type="evidence" value="ECO:0007669"/>
    <property type="project" value="UniProtKB-UniRule"/>
</dbReference>
<dbReference type="FunFam" id="3.40.1370.10:FF:000001">
    <property type="entry name" value="50S ribosomal protein L4"/>
    <property type="match status" value="1"/>
</dbReference>
<dbReference type="Gene3D" id="3.40.1370.10">
    <property type="match status" value="1"/>
</dbReference>
<dbReference type="HAMAP" id="MF_01328_B">
    <property type="entry name" value="Ribosomal_uL4_B"/>
    <property type="match status" value="1"/>
</dbReference>
<dbReference type="InterPro" id="IPR002136">
    <property type="entry name" value="Ribosomal_uL4"/>
</dbReference>
<dbReference type="InterPro" id="IPR013005">
    <property type="entry name" value="Ribosomal_uL4-like"/>
</dbReference>
<dbReference type="InterPro" id="IPR023574">
    <property type="entry name" value="Ribosomal_uL4_dom_sf"/>
</dbReference>
<dbReference type="NCBIfam" id="TIGR03953">
    <property type="entry name" value="rplD_bact"/>
    <property type="match status" value="1"/>
</dbReference>
<dbReference type="PANTHER" id="PTHR10746">
    <property type="entry name" value="50S RIBOSOMAL PROTEIN L4"/>
    <property type="match status" value="1"/>
</dbReference>
<dbReference type="PANTHER" id="PTHR10746:SF6">
    <property type="entry name" value="LARGE RIBOSOMAL SUBUNIT PROTEIN UL4M"/>
    <property type="match status" value="1"/>
</dbReference>
<dbReference type="Pfam" id="PF00573">
    <property type="entry name" value="Ribosomal_L4"/>
    <property type="match status" value="1"/>
</dbReference>
<dbReference type="SUPFAM" id="SSF52166">
    <property type="entry name" value="Ribosomal protein L4"/>
    <property type="match status" value="1"/>
</dbReference>
<name>RL4_ECOL6</name>
<accession>P60724</accession>
<accession>P02388</accession>
<reference key="1">
    <citation type="journal article" date="2002" name="Proc. Natl. Acad. Sci. U.S.A.">
        <title>Extensive mosaic structure revealed by the complete genome sequence of uropathogenic Escherichia coli.</title>
        <authorList>
            <person name="Welch R.A."/>
            <person name="Burland V."/>
            <person name="Plunkett G. III"/>
            <person name="Redford P."/>
            <person name="Roesch P."/>
            <person name="Rasko D."/>
            <person name="Buckles E.L."/>
            <person name="Liou S.-R."/>
            <person name="Boutin A."/>
            <person name="Hackett J."/>
            <person name="Stroud D."/>
            <person name="Mayhew G.F."/>
            <person name="Rose D.J."/>
            <person name="Zhou S."/>
            <person name="Schwartz D.C."/>
            <person name="Perna N.T."/>
            <person name="Mobley H.L.T."/>
            <person name="Donnenberg M.S."/>
            <person name="Blattner F.R."/>
        </authorList>
    </citation>
    <scope>NUCLEOTIDE SEQUENCE [LARGE SCALE GENOMIC DNA]</scope>
    <source>
        <strain>CFT073 / ATCC 700928 / UPEC</strain>
    </source>
</reference>
<gene>
    <name evidence="2" type="primary">rplD</name>
    <name type="ordered locus">c4089</name>
</gene>
<keyword id="KW-1185">Reference proteome</keyword>
<keyword id="KW-0678">Repressor</keyword>
<keyword id="KW-0687">Ribonucleoprotein</keyword>
<keyword id="KW-0689">Ribosomal protein</keyword>
<keyword id="KW-0694">RNA-binding</keyword>
<keyword id="KW-0699">rRNA-binding</keyword>
<keyword id="KW-0804">Transcription</keyword>
<keyword id="KW-0805">Transcription regulation</keyword>
<keyword id="KW-0806">Transcription termination</keyword>
<keyword id="KW-0810">Translation regulation</keyword>
<proteinExistence type="inferred from homology"/>